<reference key="1">
    <citation type="journal article" date="2004" name="Nat. Biotechnol.">
        <title>Complete sequence and comparative genome analysis of the dairy bacterium Streptococcus thermophilus.</title>
        <authorList>
            <person name="Bolotin A."/>
            <person name="Quinquis B."/>
            <person name="Renault P."/>
            <person name="Sorokin A."/>
            <person name="Ehrlich S.D."/>
            <person name="Kulakauskas S."/>
            <person name="Lapidus A."/>
            <person name="Goltsman E."/>
            <person name="Mazur M."/>
            <person name="Pusch G.D."/>
            <person name="Fonstein M."/>
            <person name="Overbeek R."/>
            <person name="Kyprides N."/>
            <person name="Purnelle B."/>
            <person name="Prozzi D."/>
            <person name="Ngui K."/>
            <person name="Masuy D."/>
            <person name="Hancy F."/>
            <person name="Burteau S."/>
            <person name="Boutry M."/>
            <person name="Delcour J."/>
            <person name="Goffeau A."/>
            <person name="Hols P."/>
        </authorList>
    </citation>
    <scope>NUCLEOTIDE SEQUENCE [LARGE SCALE GENOMIC DNA]</scope>
    <source>
        <strain>CNRZ 1066</strain>
    </source>
</reference>
<protein>
    <recommendedName>
        <fullName evidence="1">Ferredoxin--NADP reductase</fullName>
        <shortName evidence="1">FNR</shortName>
        <shortName evidence="1">Fd-NADP(+) reductase</shortName>
        <ecNumber evidence="1">1.18.1.2</ecNumber>
    </recommendedName>
</protein>
<gene>
    <name type="ordered locus">str1417</name>
</gene>
<sequence length="332" mass="36266">MAEEKIYDITIIGGGPVGLWAAFYAGLRGMTVNIIESLSELGGQPAILYPEKKIYDIPAFPQTTGAELIENLLIQLKRFEDRVSIHLKEEVQTFKKTDGIFTIATSKGQHLSKAIVIACGNGAFAPRPLGVDNEEDFANNNLLYNVHSLDQFAGKKVVIAGGGDSAVDWANHLDGVAESVTLIHRRDAFRAHEHSVELLYQSSVNVMTPYVPLEIKGENGHAQSLTVQRVKSDEVVELPIDALIVSFGFSTNNKNLRNWNVDYKRSSITVNAQFETSQEGVYAIGGAAEYDGKIDLIAVGMGEAPIAINQAIQYIEPDGKNRPVHSTSLIEE</sequence>
<comment type="catalytic activity">
    <reaction evidence="1">
        <text>2 reduced [2Fe-2S]-[ferredoxin] + NADP(+) + H(+) = 2 oxidized [2Fe-2S]-[ferredoxin] + NADPH</text>
        <dbReference type="Rhea" id="RHEA:20125"/>
        <dbReference type="Rhea" id="RHEA-COMP:10000"/>
        <dbReference type="Rhea" id="RHEA-COMP:10001"/>
        <dbReference type="ChEBI" id="CHEBI:15378"/>
        <dbReference type="ChEBI" id="CHEBI:33737"/>
        <dbReference type="ChEBI" id="CHEBI:33738"/>
        <dbReference type="ChEBI" id="CHEBI:57783"/>
        <dbReference type="ChEBI" id="CHEBI:58349"/>
        <dbReference type="EC" id="1.18.1.2"/>
    </reaction>
</comment>
<comment type="cofactor">
    <cofactor evidence="1">
        <name>FAD</name>
        <dbReference type="ChEBI" id="CHEBI:57692"/>
    </cofactor>
    <text evidence="1">Binds 1 FAD per subunit.</text>
</comment>
<comment type="subunit">
    <text evidence="1">Homodimer.</text>
</comment>
<comment type="similarity">
    <text evidence="1">Belongs to the ferredoxin--NADP reductase type 2 family.</text>
</comment>
<organism>
    <name type="scientific">Streptococcus thermophilus (strain CNRZ 1066)</name>
    <dbReference type="NCBI Taxonomy" id="299768"/>
    <lineage>
        <taxon>Bacteria</taxon>
        <taxon>Bacillati</taxon>
        <taxon>Bacillota</taxon>
        <taxon>Bacilli</taxon>
        <taxon>Lactobacillales</taxon>
        <taxon>Streptococcaceae</taxon>
        <taxon>Streptococcus</taxon>
    </lineage>
</organism>
<proteinExistence type="inferred from homology"/>
<feature type="chain" id="PRO_0000364978" description="Ferredoxin--NADP reductase">
    <location>
        <begin position="1"/>
        <end position="332"/>
    </location>
</feature>
<feature type="binding site" evidence="1">
    <location>
        <position position="36"/>
    </location>
    <ligand>
        <name>FAD</name>
        <dbReference type="ChEBI" id="CHEBI:57692"/>
    </ligand>
</feature>
<feature type="binding site" evidence="1">
    <location>
        <position position="44"/>
    </location>
    <ligand>
        <name>FAD</name>
        <dbReference type="ChEBI" id="CHEBI:57692"/>
    </ligand>
</feature>
<feature type="binding site" evidence="1">
    <location>
        <position position="49"/>
    </location>
    <ligand>
        <name>FAD</name>
        <dbReference type="ChEBI" id="CHEBI:57692"/>
    </ligand>
</feature>
<feature type="binding site" evidence="1">
    <location>
        <position position="91"/>
    </location>
    <ligand>
        <name>FAD</name>
        <dbReference type="ChEBI" id="CHEBI:57692"/>
    </ligand>
</feature>
<feature type="binding site" evidence="1">
    <location>
        <position position="124"/>
    </location>
    <ligand>
        <name>FAD</name>
        <dbReference type="ChEBI" id="CHEBI:57692"/>
    </ligand>
</feature>
<feature type="binding site" evidence="1">
    <location>
        <position position="327"/>
    </location>
    <ligand>
        <name>FAD</name>
        <dbReference type="ChEBI" id="CHEBI:57692"/>
    </ligand>
</feature>
<accession>Q5LYY3</accession>
<dbReference type="EC" id="1.18.1.2" evidence="1"/>
<dbReference type="EMBL" id="CP000024">
    <property type="protein sequence ID" value="AAV62954.1"/>
    <property type="molecule type" value="Genomic_DNA"/>
</dbReference>
<dbReference type="RefSeq" id="WP_011226284.1">
    <property type="nucleotide sequence ID" value="NC_006449.1"/>
</dbReference>
<dbReference type="SMR" id="Q5LYY3"/>
<dbReference type="KEGG" id="stc:str1417"/>
<dbReference type="HOGENOM" id="CLU_031864_5_5_9"/>
<dbReference type="GO" id="GO:0004324">
    <property type="term" value="F:ferredoxin-NADP+ reductase activity"/>
    <property type="evidence" value="ECO:0007669"/>
    <property type="project" value="UniProtKB-UniRule"/>
</dbReference>
<dbReference type="GO" id="GO:0050660">
    <property type="term" value="F:flavin adenine dinucleotide binding"/>
    <property type="evidence" value="ECO:0007669"/>
    <property type="project" value="UniProtKB-UniRule"/>
</dbReference>
<dbReference type="GO" id="GO:0050661">
    <property type="term" value="F:NADP binding"/>
    <property type="evidence" value="ECO:0007669"/>
    <property type="project" value="UniProtKB-UniRule"/>
</dbReference>
<dbReference type="Gene3D" id="3.50.50.60">
    <property type="entry name" value="FAD/NAD(P)-binding domain"/>
    <property type="match status" value="2"/>
</dbReference>
<dbReference type="HAMAP" id="MF_01685">
    <property type="entry name" value="FENR2"/>
    <property type="match status" value="1"/>
</dbReference>
<dbReference type="InterPro" id="IPR036188">
    <property type="entry name" value="FAD/NAD-bd_sf"/>
</dbReference>
<dbReference type="InterPro" id="IPR023753">
    <property type="entry name" value="FAD/NAD-binding_dom"/>
</dbReference>
<dbReference type="InterPro" id="IPR022890">
    <property type="entry name" value="Fd--NADP_Rdtase_type_2"/>
</dbReference>
<dbReference type="InterPro" id="IPR050097">
    <property type="entry name" value="Ferredoxin-NADP_redctase_2"/>
</dbReference>
<dbReference type="PANTHER" id="PTHR48105">
    <property type="entry name" value="THIOREDOXIN REDUCTASE 1-RELATED-RELATED"/>
    <property type="match status" value="1"/>
</dbReference>
<dbReference type="Pfam" id="PF07992">
    <property type="entry name" value="Pyr_redox_2"/>
    <property type="match status" value="1"/>
</dbReference>
<dbReference type="PRINTS" id="PR00368">
    <property type="entry name" value="FADPNR"/>
</dbReference>
<dbReference type="PRINTS" id="PR00469">
    <property type="entry name" value="PNDRDTASEII"/>
</dbReference>
<dbReference type="SUPFAM" id="SSF51905">
    <property type="entry name" value="FAD/NAD(P)-binding domain"/>
    <property type="match status" value="1"/>
</dbReference>
<name>FENR_STRT1</name>
<evidence type="ECO:0000255" key="1">
    <source>
        <dbReference type="HAMAP-Rule" id="MF_01685"/>
    </source>
</evidence>
<keyword id="KW-0274">FAD</keyword>
<keyword id="KW-0285">Flavoprotein</keyword>
<keyword id="KW-0521">NADP</keyword>
<keyword id="KW-0560">Oxidoreductase</keyword>